<sequence length="119" mass="13899">MQKLNRSFKISNEIKKKISWIICYQLCDPRLFNILISVSSVNLSRDFSYAKIYVSILNNKNISFKEILTILQNSSKHIRYLLAKGIFLRIIPTLHFCHDSSYVNGTKITNLINNVLYNK</sequence>
<reference key="1">
    <citation type="journal article" date="2003" name="Proc. Natl. Acad. Sci. U.S.A.">
        <title>Reductive genome evolution in Buchnera aphidicola.</title>
        <authorList>
            <person name="van Ham R.C.H.J."/>
            <person name="Kamerbeek J."/>
            <person name="Palacios C."/>
            <person name="Rausell C."/>
            <person name="Abascal F."/>
            <person name="Bastolla U."/>
            <person name="Fernandez J.M."/>
            <person name="Jimenez L."/>
            <person name="Postigo M."/>
            <person name="Silva F.J."/>
            <person name="Tamames J."/>
            <person name="Viguera E."/>
            <person name="Latorre A."/>
            <person name="Valencia A."/>
            <person name="Moran F."/>
            <person name="Moya A."/>
        </authorList>
    </citation>
    <scope>NUCLEOTIDE SEQUENCE [LARGE SCALE GENOMIC DNA]</scope>
    <source>
        <strain>Bp</strain>
    </source>
</reference>
<proteinExistence type="inferred from homology"/>
<evidence type="ECO:0000255" key="1">
    <source>
        <dbReference type="HAMAP-Rule" id="MF_00003"/>
    </source>
</evidence>
<evidence type="ECO:0000305" key="2"/>
<dbReference type="EMBL" id="AE016826">
    <property type="protein sequence ID" value="AAO27060.1"/>
    <property type="status" value="ALT_INIT"/>
    <property type="molecule type" value="Genomic_DNA"/>
</dbReference>
<dbReference type="RefSeq" id="WP_044010545.1">
    <property type="nucleotide sequence ID" value="NC_004545.1"/>
</dbReference>
<dbReference type="SMR" id="P59411"/>
<dbReference type="STRING" id="224915.bbp_339"/>
<dbReference type="KEGG" id="bab:bbp_339"/>
<dbReference type="eggNOG" id="COG0858">
    <property type="taxonomic scope" value="Bacteria"/>
</dbReference>
<dbReference type="HOGENOM" id="CLU_089475_5_1_6"/>
<dbReference type="Proteomes" id="UP000000601">
    <property type="component" value="Chromosome"/>
</dbReference>
<dbReference type="GO" id="GO:0005829">
    <property type="term" value="C:cytosol"/>
    <property type="evidence" value="ECO:0007669"/>
    <property type="project" value="TreeGrafter"/>
</dbReference>
<dbReference type="GO" id="GO:0043024">
    <property type="term" value="F:ribosomal small subunit binding"/>
    <property type="evidence" value="ECO:0007669"/>
    <property type="project" value="TreeGrafter"/>
</dbReference>
<dbReference type="GO" id="GO:0030490">
    <property type="term" value="P:maturation of SSU-rRNA"/>
    <property type="evidence" value="ECO:0007669"/>
    <property type="project" value="UniProtKB-UniRule"/>
</dbReference>
<dbReference type="Gene3D" id="3.30.300.20">
    <property type="match status" value="1"/>
</dbReference>
<dbReference type="HAMAP" id="MF_00003">
    <property type="entry name" value="RbfA"/>
    <property type="match status" value="1"/>
</dbReference>
<dbReference type="InterPro" id="IPR015946">
    <property type="entry name" value="KH_dom-like_a/b"/>
</dbReference>
<dbReference type="InterPro" id="IPR000238">
    <property type="entry name" value="RbfA"/>
</dbReference>
<dbReference type="InterPro" id="IPR023799">
    <property type="entry name" value="RbfA_dom_sf"/>
</dbReference>
<dbReference type="InterPro" id="IPR020053">
    <property type="entry name" value="Ribosome-bd_factorA_CS"/>
</dbReference>
<dbReference type="NCBIfam" id="TIGR00082">
    <property type="entry name" value="rbfA"/>
    <property type="match status" value="1"/>
</dbReference>
<dbReference type="PANTHER" id="PTHR33515">
    <property type="entry name" value="RIBOSOME-BINDING FACTOR A, CHLOROPLASTIC-RELATED"/>
    <property type="match status" value="1"/>
</dbReference>
<dbReference type="PANTHER" id="PTHR33515:SF1">
    <property type="entry name" value="RIBOSOME-BINDING FACTOR A, CHLOROPLASTIC-RELATED"/>
    <property type="match status" value="1"/>
</dbReference>
<dbReference type="Pfam" id="PF02033">
    <property type="entry name" value="RBFA"/>
    <property type="match status" value="1"/>
</dbReference>
<dbReference type="SUPFAM" id="SSF89919">
    <property type="entry name" value="Ribosome-binding factor A, RbfA"/>
    <property type="match status" value="1"/>
</dbReference>
<dbReference type="PROSITE" id="PS01319">
    <property type="entry name" value="RBFA"/>
    <property type="match status" value="1"/>
</dbReference>
<comment type="function">
    <text evidence="1">One of several proteins that assist in the late maturation steps of the functional core of the 30S ribosomal subunit. Associates with free 30S ribosomal subunits (but not with 30S subunits that are part of 70S ribosomes or polysomes). Required for efficient processing of 16S rRNA. May interact with the 5'-terminal helix region of 16S rRNA.</text>
</comment>
<comment type="subunit">
    <text evidence="1">Monomer. Binds 30S ribosomal subunits, but not 50S ribosomal subunits or 70S ribosomes.</text>
</comment>
<comment type="subcellular location">
    <subcellularLocation>
        <location evidence="1">Cytoplasm</location>
    </subcellularLocation>
</comment>
<comment type="similarity">
    <text evidence="1">Belongs to the RbfA family.</text>
</comment>
<comment type="sequence caution" evidence="2">
    <conflict type="erroneous initiation">
        <sequence resource="EMBL-CDS" id="AAO27060"/>
    </conflict>
    <text>Extended N-terminus.</text>
</comment>
<name>RBFA_BUCBP</name>
<protein>
    <recommendedName>
        <fullName evidence="1">Ribosome-binding factor A</fullName>
    </recommendedName>
</protein>
<keyword id="KW-0963">Cytoplasm</keyword>
<keyword id="KW-1185">Reference proteome</keyword>
<keyword id="KW-0690">Ribosome biogenesis</keyword>
<accession>P59411</accession>
<organism>
    <name type="scientific">Buchnera aphidicola subsp. Baizongia pistaciae (strain Bp)</name>
    <dbReference type="NCBI Taxonomy" id="224915"/>
    <lineage>
        <taxon>Bacteria</taxon>
        <taxon>Pseudomonadati</taxon>
        <taxon>Pseudomonadota</taxon>
        <taxon>Gammaproteobacteria</taxon>
        <taxon>Enterobacterales</taxon>
        <taxon>Erwiniaceae</taxon>
        <taxon>Buchnera</taxon>
    </lineage>
</organism>
<feature type="chain" id="PRO_0000102636" description="Ribosome-binding factor A">
    <location>
        <begin position="1"/>
        <end position="119"/>
    </location>
</feature>
<gene>
    <name evidence="1" type="primary">rbfA</name>
    <name type="ordered locus">bbp_339</name>
</gene>